<sequence>SPSSPTVFPLVSCESPLSDENLVAMGCLARDFLPSSISFSWNYQNKSEVNQGVRTFPTLRMGEKYAATSQVFLPPKSVLEGSDEYLVCKVHHGNTNKDLRVPIPVVTEMNPNVSVFVPSRDAFSGPAPRKSRLFCEASNFSPKQITVSWLRDGKPVKSGFTTEPVTPEDRGSGPRTYKVISTLTITESDWLNLSVYTCRVDHRGLTFWKNVSSTCAASPSTDIQAFPIPPSFVGIFLNKSATLTCLVTNLATYDTLNISWSSRSGEPLETKTKLTESHPNGTFSAIGEANVCVEDWDSGKEFVCTVTHRDLPSPQKKFISKPREMNKTPPAVYQQPLAREQLILRESATVTCLVKGFSPADIFVQWLQRGQPLSQDKYVTSAPMREPQAPHLYFTHSVLTVTEEEWNSGETYTCVVGHEALPHMVTERTVDRSTGKPTLYNVSLIMSDAGGTCY</sequence>
<name>IGHM_MESAU</name>
<organism>
    <name type="scientific">Mesocricetus auratus</name>
    <name type="common">Golden hamster</name>
    <dbReference type="NCBI Taxonomy" id="10036"/>
    <lineage>
        <taxon>Eukaryota</taxon>
        <taxon>Metazoa</taxon>
        <taxon>Chordata</taxon>
        <taxon>Craniata</taxon>
        <taxon>Vertebrata</taxon>
        <taxon>Euteleostomi</taxon>
        <taxon>Mammalia</taxon>
        <taxon>Eutheria</taxon>
        <taxon>Euarchontoglires</taxon>
        <taxon>Glires</taxon>
        <taxon>Rodentia</taxon>
        <taxon>Myomorpha</taxon>
        <taxon>Muroidea</taxon>
        <taxon>Cricetidae</taxon>
        <taxon>Cricetinae</taxon>
        <taxon>Mesocricetus</taxon>
    </lineage>
</organism>
<reference key="1">
    <citation type="journal article" date="1985" name="Nucleic Acids Res.">
        <title>Phylogenetic conservation of immunoglobulin heavy chains: direct comparison of hamster and mouse Cmu genes.</title>
        <authorList>
            <person name="McGuire K.L."/>
            <person name="Duncan W.R."/>
            <person name="Tucker P.W."/>
        </authorList>
    </citation>
    <scope>NUCLEOTIDE SEQUENCE [GENOMIC DNA]</scope>
</reference>
<dbReference type="EMBL" id="X02804">
    <property type="protein sequence ID" value="CAA26574.1"/>
    <property type="molecule type" value="Genomic_DNA"/>
</dbReference>
<dbReference type="PIR" id="A02168">
    <property type="entry name" value="MHHY"/>
</dbReference>
<dbReference type="SMR" id="P06337"/>
<dbReference type="STRING" id="10036.ENSMAUP00000005720"/>
<dbReference type="Proteomes" id="UP000189706">
    <property type="component" value="Unplaced"/>
</dbReference>
<dbReference type="CDD" id="cd21819">
    <property type="entry name" value="IgC1_CH1_IgM"/>
    <property type="match status" value="1"/>
</dbReference>
<dbReference type="CDD" id="cd16093">
    <property type="entry name" value="IgC1_CH2_Mu"/>
    <property type="match status" value="1"/>
</dbReference>
<dbReference type="CDD" id="cd05768">
    <property type="entry name" value="IgC1_CH3_IgAGD_CH4_IgAEM"/>
    <property type="match status" value="1"/>
</dbReference>
<dbReference type="FunFam" id="2.60.40.10:FF:000998">
    <property type="entry name" value="Immunoglobulin heavy constant epsilon"/>
    <property type="match status" value="1"/>
</dbReference>
<dbReference type="FunFam" id="2.60.40.10:FF:000463">
    <property type="entry name" value="Immunoglobulin heavy constant gamma 1"/>
    <property type="match status" value="2"/>
</dbReference>
<dbReference type="FunFam" id="2.60.40.10:FF:001836">
    <property type="entry name" value="Immunoglobulin heavy constant mu"/>
    <property type="match status" value="1"/>
</dbReference>
<dbReference type="Gene3D" id="2.60.40.10">
    <property type="entry name" value="Immunoglobulins"/>
    <property type="match status" value="4"/>
</dbReference>
<dbReference type="InterPro" id="IPR007110">
    <property type="entry name" value="Ig-like_dom"/>
</dbReference>
<dbReference type="InterPro" id="IPR036179">
    <property type="entry name" value="Ig-like_dom_sf"/>
</dbReference>
<dbReference type="InterPro" id="IPR013783">
    <property type="entry name" value="Ig-like_fold"/>
</dbReference>
<dbReference type="InterPro" id="IPR003006">
    <property type="entry name" value="Ig/MHC_CS"/>
</dbReference>
<dbReference type="InterPro" id="IPR003597">
    <property type="entry name" value="Ig_C1-set"/>
</dbReference>
<dbReference type="InterPro" id="IPR050380">
    <property type="entry name" value="Immune_Resp_Modulators"/>
</dbReference>
<dbReference type="PANTHER" id="PTHR23411">
    <property type="entry name" value="TAPASIN"/>
    <property type="match status" value="1"/>
</dbReference>
<dbReference type="Pfam" id="PF07654">
    <property type="entry name" value="C1-set"/>
    <property type="match status" value="4"/>
</dbReference>
<dbReference type="SMART" id="SM00407">
    <property type="entry name" value="IGc1"/>
    <property type="match status" value="4"/>
</dbReference>
<dbReference type="SUPFAM" id="SSF48726">
    <property type="entry name" value="Immunoglobulin"/>
    <property type="match status" value="4"/>
</dbReference>
<dbReference type="PROSITE" id="PS50835">
    <property type="entry name" value="IG_LIKE"/>
    <property type="match status" value="4"/>
</dbReference>
<dbReference type="PROSITE" id="PS00290">
    <property type="entry name" value="IG_MHC"/>
    <property type="match status" value="3"/>
</dbReference>
<proteinExistence type="predicted"/>
<keyword id="KW-1015">Disulfide bond</keyword>
<keyword id="KW-0325">Glycoprotein</keyword>
<keyword id="KW-0393">Immunoglobulin domain</keyword>
<keyword id="KW-1185">Reference proteome</keyword>
<accession>P06337</accession>
<feature type="chain" id="PRO_0000153620" description="Ig mu chain C region">
    <location>
        <begin position="1" status="less than"/>
        <end position="454"/>
    </location>
</feature>
<feature type="region of interest" description="CH1">
    <location>
        <begin position="1"/>
        <end position="105"/>
    </location>
</feature>
<feature type="region of interest" description="CH2">
    <location>
        <begin position="106"/>
        <end position="218"/>
    </location>
</feature>
<feature type="region of interest" description="CH3">
    <location>
        <begin position="219"/>
        <end position="324"/>
    </location>
</feature>
<feature type="region of interest" description="CH4">
    <location>
        <begin position="325"/>
        <end position="454"/>
    </location>
</feature>
<feature type="glycosylation site" description="N-linked (GlcNAc...) asparagine" evidence="1">
    <location>
        <position position="45"/>
    </location>
</feature>
<feature type="glycosylation site" description="N-linked (GlcNAc...) asparagine" evidence="1">
    <location>
        <position position="112"/>
    </location>
</feature>
<feature type="glycosylation site" description="N-linked (GlcNAc...) asparagine" evidence="1">
    <location>
        <position position="192"/>
    </location>
</feature>
<feature type="glycosylation site" description="N-linked (GlcNAc...) asparagine" evidence="1">
    <location>
        <position position="210"/>
    </location>
</feature>
<feature type="glycosylation site" description="N-linked (GlcNAc...) asparagine" evidence="1">
    <location>
        <position position="238"/>
    </location>
</feature>
<feature type="glycosylation site" description="N-linked (GlcNAc...) asparagine" evidence="1">
    <location>
        <position position="257"/>
    </location>
</feature>
<feature type="glycosylation site" description="N-linked (GlcNAc...) asparagine" evidence="1">
    <location>
        <position position="280"/>
    </location>
</feature>
<feature type="glycosylation site" description="N-linked (GlcNAc...) asparagine" evidence="1">
    <location>
        <position position="441"/>
    </location>
</feature>
<feature type="disulfide bond" description="Interchain (with light chain)" evidence="3">
    <location>
        <position position="13"/>
    </location>
</feature>
<feature type="disulfide bond" evidence="2">
    <location>
        <begin position="27"/>
        <end position="88"/>
    </location>
</feature>
<feature type="disulfide bond" evidence="2">
    <location>
        <begin position="135"/>
        <end position="198"/>
    </location>
</feature>
<feature type="disulfide bond" description="Interchain (with heavy chain)" evidence="3">
    <location>
        <position position="215"/>
    </location>
</feature>
<feature type="disulfide bond" evidence="2">
    <location>
        <begin position="245"/>
        <end position="304"/>
    </location>
</feature>
<feature type="disulfide bond" description="Interchain (with heavy chain)" evidence="3">
    <location>
        <position position="292"/>
    </location>
</feature>
<feature type="disulfide bond" evidence="2">
    <location>
        <begin position="352"/>
        <end position="414"/>
    </location>
</feature>
<feature type="disulfide bond" description="Interchain (with heavy chain)" evidence="3">
    <location>
        <position position="453"/>
    </location>
</feature>
<feature type="non-terminal residue">
    <location>
        <position position="1"/>
    </location>
</feature>
<protein>
    <recommendedName>
        <fullName>Ig mu chain C region</fullName>
    </recommendedName>
</protein>
<evidence type="ECO:0000255" key="1"/>
<evidence type="ECO:0000255" key="2">
    <source>
        <dbReference type="PROSITE-ProRule" id="PRU00114"/>
    </source>
</evidence>
<evidence type="ECO:0000305" key="3"/>